<evidence type="ECO:0000250" key="1">
    <source>
        <dbReference type="UniProtKB" id="Q13753"/>
    </source>
</evidence>
<evidence type="ECO:0000255" key="2"/>
<evidence type="ECO:0000255" key="3">
    <source>
        <dbReference type="PROSITE-ProRule" id="PRU00458"/>
    </source>
</evidence>
<evidence type="ECO:0000255" key="4">
    <source>
        <dbReference type="PROSITE-ProRule" id="PRU00460"/>
    </source>
</evidence>
<evidence type="ECO:0000269" key="5">
    <source>
    </source>
</evidence>
<evidence type="ECO:0000305" key="6"/>
<sequence length="1191" mass="130161">MPALWLSCCLGVALLLPAAQATSRREVCDCNGKSRQCVFDQELHRQTGSGFRCLNCNDNTAGVHCERCREGFYRHRDRDRCLPCNCHSKGSLSAGCDNSGQCRCKPGVTGQRCDRCQPGFHMLTDAGCTRDQGQLDSKCDCDPAGISGPCDSGRCVCKPAVTGERCDRCRPGYYHLDRANPEGCTQCFCYGHSASCHASADFSVHKITSTFSQDVDGWKAVQRNGAPAKLHWSQRHRDVFSSARRSDPVYFVAPAKFLGNQQVSYGQSLSFDYRVDRGGRQPSAYDVILEGAGLQIRAPLMAPGKTLPCGITKTYTFRLNEHPSSHWSPQLSYFEYRRLLRNLTALLIRATYGEYSTGYIDNVTLVSARPVSGAPAPWVERCVCPAGYKGQFCQECASGYKRDSARLGPFGACVPCNCQGGGACDPDTGDCYSGDENPDIECADCPIGFYNDPHDPRSCKPCPCHNGFSCSVMPETEEVVCNNCPPGVTGARCELCADGFFGDPFGERGPVRPCQRCQCNNNVDPNASGNCDQLTGRCLKCIYNTAGVYCDQCKAGYFGDPLAPNPADKCRACNCSPMGSEPGECRGDGSCVCKPGFGGLNCDHAALTSCPACYNQVKIQMDQFTQQLQSLEALVSKAQGGGGGGTVPVQLEGRIEQAEQALQDILGEAQISEGAMRAVAVRLAKARSQENDYKTRLDDLKMTAERIRALGSQHQNRVQDTSRLISQMRLSLAGSEALLENTNIHSSEHYVGPNDFKSLAQEATRKADSHAESANAMKQLARETEDYSKQALSLARKLLSGGGGSGSWDSSVVQGLMGKLEKTKSLSQQLSLEGTQADIEADRSYQHSLRLLDSASQLQGVSDLSFQVEAKRIRQKADSLSNLVTRQTDAFTRVRNNLGNWEKETRQLLQTGKDRRQTSDQLLSRANLAKNRAQEALSMGNATFYEVENILKNLREFDLQVEDRKAEAEEAMKRLSSISQKVADASDKTQQAETALGSATADTQRAKNAAREALEISSEIELEIGSLNLEANVTADGALAMEKGTATLKSEMREMIELARKELEFDTDKDTVQLVITEAQQADARATSAGVTIQDTLNTLDGILHLIDQPGSVDEEGMMLLEQGLFQAKTQINSRLRPLMSDLEERVRRQRNHLHLLETSIDGILADVKNLENIRDNLPPGCYNTQALEQQ</sequence>
<accession>Q61092</accession>
<feature type="signal peptide" evidence="2">
    <location>
        <begin position="1"/>
        <end position="21"/>
    </location>
</feature>
<feature type="chain" id="PRO_0000017078" description="Laminin subunit gamma-2">
    <location>
        <begin position="22"/>
        <end position="1191"/>
    </location>
</feature>
<feature type="domain" description="Laminin EGF-like 1" evidence="4">
    <location>
        <begin position="28"/>
        <end position="83"/>
    </location>
</feature>
<feature type="domain" description="Laminin EGF-like 2" evidence="4">
    <location>
        <begin position="84"/>
        <end position="130"/>
    </location>
</feature>
<feature type="domain" description="Laminin EGF-like 3" evidence="4">
    <location>
        <begin position="139"/>
        <end position="186"/>
    </location>
</feature>
<feature type="domain" description="Laminin EGF-like 4; first part" evidence="4">
    <location>
        <begin position="187"/>
        <end position="196"/>
    </location>
</feature>
<feature type="domain" description="Laminin IV type A" evidence="3">
    <location>
        <begin position="213"/>
        <end position="381"/>
    </location>
</feature>
<feature type="domain" description="Laminin EGF-like 4; second part" evidence="4">
    <location>
        <begin position="382"/>
        <end position="415"/>
    </location>
</feature>
<feature type="domain" description="Laminin EGF-like 5" evidence="4">
    <location>
        <begin position="416"/>
        <end position="461"/>
    </location>
</feature>
<feature type="domain" description="Laminin EGF-like 6" evidence="4">
    <location>
        <begin position="462"/>
        <end position="516"/>
    </location>
</feature>
<feature type="domain" description="Laminin EGF-like 7" evidence="4">
    <location>
        <begin position="517"/>
        <end position="572"/>
    </location>
</feature>
<feature type="domain" description="Laminin EGF-like 8; truncated" evidence="4">
    <location>
        <begin position="573"/>
        <end position="602"/>
    </location>
</feature>
<feature type="region of interest" description="Domain II and I">
    <location>
        <begin position="603"/>
        <end position="1191"/>
    </location>
</feature>
<feature type="coiled-coil region" evidence="2">
    <location>
        <begin position="612"/>
        <end position="710"/>
    </location>
</feature>
<feature type="coiled-coil region" evidence="2">
    <location>
        <begin position="759"/>
        <end position="786"/>
    </location>
</feature>
<feature type="coiled-coil region" evidence="2">
    <location>
        <begin position="946"/>
        <end position="996"/>
    </location>
</feature>
<feature type="coiled-coil region" evidence="2">
    <location>
        <begin position="1139"/>
        <end position="1178"/>
    </location>
</feature>
<feature type="short sequence motif" description="Cell attachment site" evidence="2">
    <location>
        <begin position="586"/>
        <end position="588"/>
    </location>
</feature>
<feature type="glycosylation site" description="N-linked (GlcNAc...) asparagine" evidence="2">
    <location>
        <position position="342"/>
    </location>
</feature>
<feature type="glycosylation site" description="N-linked (GlcNAc...) asparagine" evidence="2">
    <location>
        <position position="362"/>
    </location>
</feature>
<feature type="glycosylation site" description="N-linked (GlcNAc...) asparagine" evidence="2">
    <location>
        <position position="526"/>
    </location>
</feature>
<feature type="glycosylation site" description="O-linked (Xyl...) (chondroitin sulfate) serine" evidence="2">
    <location>
        <position position="805"/>
    </location>
</feature>
<feature type="glycosylation site" description="N-linked (GlcNAc...) asparagine" evidence="2">
    <location>
        <position position="941"/>
    </location>
</feature>
<feature type="glycosylation site" description="N-linked (GlcNAc...) asparagine" evidence="2">
    <location>
        <position position="1032"/>
    </location>
</feature>
<feature type="disulfide bond" evidence="4">
    <location>
        <begin position="28"/>
        <end position="37"/>
    </location>
</feature>
<feature type="disulfide bond" evidence="4">
    <location>
        <begin position="30"/>
        <end position="53"/>
    </location>
</feature>
<feature type="disulfide bond" evidence="4">
    <location>
        <begin position="56"/>
        <end position="65"/>
    </location>
</feature>
<feature type="disulfide bond" evidence="4">
    <location>
        <begin position="68"/>
        <end position="81"/>
    </location>
</feature>
<feature type="disulfide bond" evidence="4">
    <location>
        <begin position="84"/>
        <end position="96"/>
    </location>
</feature>
<feature type="disulfide bond" evidence="4">
    <location>
        <begin position="86"/>
        <end position="102"/>
    </location>
</feature>
<feature type="disulfide bond" evidence="4">
    <location>
        <begin position="104"/>
        <end position="113"/>
    </location>
</feature>
<feature type="disulfide bond" evidence="4">
    <location>
        <begin position="116"/>
        <end position="128"/>
    </location>
</feature>
<feature type="disulfide bond" evidence="4">
    <location>
        <begin position="139"/>
        <end position="150"/>
    </location>
</feature>
<feature type="disulfide bond" evidence="4">
    <location>
        <begin position="141"/>
        <end position="155"/>
    </location>
</feature>
<feature type="disulfide bond" evidence="4">
    <location>
        <begin position="157"/>
        <end position="166"/>
    </location>
</feature>
<feature type="disulfide bond" evidence="4">
    <location>
        <begin position="169"/>
        <end position="184"/>
    </location>
</feature>
<feature type="disulfide bond" evidence="4">
    <location>
        <begin position="462"/>
        <end position="470"/>
    </location>
</feature>
<feature type="disulfide bond" evidence="4">
    <location>
        <begin position="464"/>
        <end position="481"/>
    </location>
</feature>
<feature type="disulfide bond" evidence="4">
    <location>
        <begin position="484"/>
        <end position="493"/>
    </location>
</feature>
<feature type="disulfide bond" evidence="4">
    <location>
        <begin position="496"/>
        <end position="514"/>
    </location>
</feature>
<feature type="disulfide bond" evidence="4">
    <location>
        <begin position="517"/>
        <end position="531"/>
    </location>
</feature>
<feature type="disulfide bond" evidence="4">
    <location>
        <begin position="519"/>
        <end position="538"/>
    </location>
</feature>
<feature type="disulfide bond" evidence="4">
    <location>
        <begin position="541"/>
        <end position="550"/>
    </location>
</feature>
<feature type="disulfide bond" evidence="4">
    <location>
        <begin position="553"/>
        <end position="570"/>
    </location>
</feature>
<feature type="disulfide bond" evidence="4">
    <location>
        <begin position="573"/>
        <end position="585"/>
    </location>
</feature>
<feature type="disulfide bond" evidence="4">
    <location>
        <begin position="575"/>
        <end position="591"/>
    </location>
</feature>
<feature type="disulfide bond" evidence="4">
    <location>
        <begin position="593"/>
        <end position="602"/>
    </location>
</feature>
<feature type="disulfide bond" description="Interchain" evidence="6">
    <location>
        <position position="610"/>
    </location>
</feature>
<feature type="disulfide bond" description="Interchain" evidence="6">
    <location>
        <position position="613"/>
    </location>
</feature>
<feature type="disulfide bond" description="Interchain (with beta-3 chain)" evidence="6">
    <location>
        <position position="1182"/>
    </location>
</feature>
<feature type="mutagenesis site" description="No change to herarin-binding." evidence="5">
    <original>R</original>
    <variation>A</variation>
    <location>
        <position position="76"/>
    </location>
</feature>
<feature type="mutagenesis site" description="No change to herarin-binding." evidence="5">
    <original>R</original>
    <variation>A</variation>
    <location>
        <position position="78"/>
    </location>
</feature>
<feature type="mutagenesis site" description="No fibulin-1C binding. No change to fibulin-2 binding." evidence="5">
    <original>F</original>
    <variation>A</variation>
    <location>
        <position position="202"/>
    </location>
</feature>
<feature type="mutagenesis site" description="No fibulin-1C binding. No change to fibulin-2 binding." evidence="5">
    <original>K</original>
    <variation>A</variation>
    <location>
        <position position="206"/>
    </location>
</feature>
<feature type="mutagenesis site" description="20-fold reduction to fibulin-2 binding." evidence="5">
    <original>C</original>
    <variation>S</variation>
    <location>
        <position position="442"/>
    </location>
</feature>
<feature type="mutagenesis site" description="20-fold reduction to fibulin-2 binding." evidence="5">
    <original>C</original>
    <variation>S</variation>
    <location>
        <position position="445"/>
    </location>
</feature>
<gene>
    <name type="primary">Lamc2</name>
</gene>
<dbReference type="EMBL" id="U43327">
    <property type="protein sequence ID" value="AAA85256.2"/>
    <property type="molecule type" value="mRNA"/>
</dbReference>
<dbReference type="SMR" id="Q61092"/>
<dbReference type="ComplexPortal" id="CPX-3012">
    <property type="entry name" value="Laminin-332 complex variant A"/>
</dbReference>
<dbReference type="ComplexPortal" id="CPX-3020">
    <property type="entry name" value="Laminin-522 complex"/>
</dbReference>
<dbReference type="ComplexPortal" id="CPX-3164">
    <property type="entry name" value="Laminin-332 complex variant B"/>
</dbReference>
<dbReference type="FunCoup" id="Q61092">
    <property type="interactions" value="66"/>
</dbReference>
<dbReference type="STRING" id="10090.ENSMUSP00000027753"/>
<dbReference type="GlyCosmos" id="Q61092">
    <property type="glycosylation" value="5 sites, No reported glycans"/>
</dbReference>
<dbReference type="GlyGen" id="Q61092">
    <property type="glycosylation" value="6 sites, 2 N-linked glycans (2 sites)"/>
</dbReference>
<dbReference type="jPOST" id="Q61092"/>
<dbReference type="PaxDb" id="10090-ENSMUSP00000027753"/>
<dbReference type="ProteomicsDB" id="265037"/>
<dbReference type="Pumba" id="Q61092"/>
<dbReference type="AGR" id="MGI:99913"/>
<dbReference type="MGI" id="MGI:99913">
    <property type="gene designation" value="Lamc2"/>
</dbReference>
<dbReference type="eggNOG" id="KOG1836">
    <property type="taxonomic scope" value="Eukaryota"/>
</dbReference>
<dbReference type="InParanoid" id="Q61092"/>
<dbReference type="PhylomeDB" id="Q61092"/>
<dbReference type="ChiTaRS" id="Lamc2">
    <property type="organism name" value="mouse"/>
</dbReference>
<dbReference type="PRO" id="PR:Q61092"/>
<dbReference type="Proteomes" id="UP000000589">
    <property type="component" value="Unplaced"/>
</dbReference>
<dbReference type="RNAct" id="Q61092">
    <property type="molecule type" value="protein"/>
</dbReference>
<dbReference type="GO" id="GO:0005604">
    <property type="term" value="C:basement membrane"/>
    <property type="evidence" value="ECO:0000314"/>
    <property type="project" value="MGI"/>
</dbReference>
<dbReference type="GO" id="GO:0062023">
    <property type="term" value="C:collagen-containing extracellular matrix"/>
    <property type="evidence" value="ECO:0007005"/>
    <property type="project" value="BHF-UCL"/>
</dbReference>
<dbReference type="GO" id="GO:0005576">
    <property type="term" value="C:extracellular region"/>
    <property type="evidence" value="ECO:0000304"/>
    <property type="project" value="Reactome"/>
</dbReference>
<dbReference type="GO" id="GO:0005610">
    <property type="term" value="C:laminin-5 complex"/>
    <property type="evidence" value="ECO:0000314"/>
    <property type="project" value="MGI"/>
</dbReference>
<dbReference type="GO" id="GO:0008201">
    <property type="term" value="F:heparin binding"/>
    <property type="evidence" value="ECO:0000314"/>
    <property type="project" value="MGI"/>
</dbReference>
<dbReference type="GO" id="GO:0007155">
    <property type="term" value="P:cell adhesion"/>
    <property type="evidence" value="ECO:0007669"/>
    <property type="project" value="UniProtKB-KW"/>
</dbReference>
<dbReference type="CDD" id="cd00055">
    <property type="entry name" value="EGF_Lam"/>
    <property type="match status" value="6"/>
</dbReference>
<dbReference type="FunFam" id="2.10.25.10:FF:000067">
    <property type="entry name" value="Laminin subunit gamma 1"/>
    <property type="match status" value="1"/>
</dbReference>
<dbReference type="FunFam" id="2.10.25.10:FF:000399">
    <property type="entry name" value="Laminin subunit gamma 2"/>
    <property type="match status" value="1"/>
</dbReference>
<dbReference type="FunFam" id="2.10.25.10:FF:000441">
    <property type="entry name" value="Laminin subunit gamma 2"/>
    <property type="match status" value="1"/>
</dbReference>
<dbReference type="FunFam" id="2.10.25.10:FF:000533">
    <property type="entry name" value="Laminin subunit gamma 2"/>
    <property type="match status" value="1"/>
</dbReference>
<dbReference type="FunFam" id="2.10.25.10:FF:000174">
    <property type="entry name" value="Laminin subunit gamma-1"/>
    <property type="match status" value="1"/>
</dbReference>
<dbReference type="Gene3D" id="2.10.25.10">
    <property type="entry name" value="Laminin"/>
    <property type="match status" value="5"/>
</dbReference>
<dbReference type="InterPro" id="IPR000742">
    <property type="entry name" value="EGF-like_dom"/>
</dbReference>
<dbReference type="InterPro" id="IPR050440">
    <property type="entry name" value="Laminin/Netrin_ECM"/>
</dbReference>
<dbReference type="InterPro" id="IPR000034">
    <property type="entry name" value="Laminin_IV"/>
</dbReference>
<dbReference type="InterPro" id="IPR002049">
    <property type="entry name" value="LE_dom"/>
</dbReference>
<dbReference type="PANTHER" id="PTHR10574:SF313">
    <property type="entry name" value="LAMININ SUBUNIT GAMMA-2"/>
    <property type="match status" value="1"/>
</dbReference>
<dbReference type="PANTHER" id="PTHR10574">
    <property type="entry name" value="NETRIN/LAMININ-RELATED"/>
    <property type="match status" value="1"/>
</dbReference>
<dbReference type="Pfam" id="PF00053">
    <property type="entry name" value="EGF_laminin"/>
    <property type="match status" value="7"/>
</dbReference>
<dbReference type="Pfam" id="PF00052">
    <property type="entry name" value="Laminin_B"/>
    <property type="match status" value="1"/>
</dbReference>
<dbReference type="PRINTS" id="PR00011">
    <property type="entry name" value="EGFLAMININ"/>
</dbReference>
<dbReference type="SMART" id="SM00181">
    <property type="entry name" value="EGF"/>
    <property type="match status" value="7"/>
</dbReference>
<dbReference type="SMART" id="SM00180">
    <property type="entry name" value="EGF_Lam"/>
    <property type="match status" value="7"/>
</dbReference>
<dbReference type="SMART" id="SM00281">
    <property type="entry name" value="LamB"/>
    <property type="match status" value="1"/>
</dbReference>
<dbReference type="SUPFAM" id="SSF57196">
    <property type="entry name" value="EGF/Laminin"/>
    <property type="match status" value="5"/>
</dbReference>
<dbReference type="PROSITE" id="PS00022">
    <property type="entry name" value="EGF_1"/>
    <property type="match status" value="4"/>
</dbReference>
<dbReference type="PROSITE" id="PS01186">
    <property type="entry name" value="EGF_2"/>
    <property type="match status" value="2"/>
</dbReference>
<dbReference type="PROSITE" id="PS01248">
    <property type="entry name" value="EGF_LAM_1"/>
    <property type="match status" value="6"/>
</dbReference>
<dbReference type="PROSITE" id="PS50027">
    <property type="entry name" value="EGF_LAM_2"/>
    <property type="match status" value="6"/>
</dbReference>
<dbReference type="PROSITE" id="PS51115">
    <property type="entry name" value="LAMININ_IVA"/>
    <property type="match status" value="1"/>
</dbReference>
<proteinExistence type="evidence at protein level"/>
<comment type="function">
    <text>Binding to cells via a high affinity receptor, laminin is thought to mediate the attachment, migration and organization of cells into tissues during embryonic development by interacting with other extracellular matrix components.</text>
</comment>
<comment type="subunit">
    <text>Laminin is a complex glycoprotein, consisting of three different polypeptide chains (alpha, beta, gamma), which are bound to each other by disulfide bonds into a cross-shaped molecule comprising one long and three short arms with globules at each end. Gamma-2 is a subunit of laminin-5 (laminin-332 or epiligrin/kalinin/nicein). Binds to fibulin-1, fibulin-1c, fibulin-2 and nidogen.</text>
</comment>
<comment type="subcellular location">
    <subcellularLocation>
        <location>Secreted</location>
        <location>Extracellular space</location>
        <location>Extracellular matrix</location>
        <location>Basement membrane</location>
    </subcellularLocation>
    <text>Major component.</text>
</comment>
<comment type="tissue specificity">
    <text>Epithelial cells of many tissues, particularly high levels in tongue, hair follicles and kidney. Basement membranes of the collecting tubules of kidney and pancreas.</text>
</comment>
<comment type="domain">
    <text>The alpha-helical domains I and II are thought to interact with other laminin chains to form a coiled coil structure.</text>
</comment>
<comment type="domain">
    <text>Domain IV is globular.</text>
</comment>
<comment type="PTM">
    <text evidence="1">O-glycosylated; contains chondroitin sulfate (CS).</text>
</comment>
<comment type="miscellaneous">
    <text>Binds heparin.</text>
</comment>
<organism>
    <name type="scientific">Mus musculus</name>
    <name type="common">Mouse</name>
    <dbReference type="NCBI Taxonomy" id="10090"/>
    <lineage>
        <taxon>Eukaryota</taxon>
        <taxon>Metazoa</taxon>
        <taxon>Chordata</taxon>
        <taxon>Craniata</taxon>
        <taxon>Vertebrata</taxon>
        <taxon>Euteleostomi</taxon>
        <taxon>Mammalia</taxon>
        <taxon>Eutheria</taxon>
        <taxon>Euarchontoglires</taxon>
        <taxon>Glires</taxon>
        <taxon>Rodentia</taxon>
        <taxon>Myomorpha</taxon>
        <taxon>Muroidea</taxon>
        <taxon>Muridae</taxon>
        <taxon>Murinae</taxon>
        <taxon>Mus</taxon>
        <taxon>Mus</taxon>
    </lineage>
</organism>
<reference key="1">
    <citation type="journal article" date="1995" name="Eur. J. Biochem.">
        <title>Cloning and expression of the mouse laminin gamma 2 (B2t) chain, a subunit of epithelial cell laminin.</title>
        <authorList>
            <person name="Sugiyama S."/>
            <person name="Utani A."/>
            <person name="Yamada S."/>
            <person name="Kozak C.A."/>
            <person name="Yamada Y."/>
        </authorList>
    </citation>
    <scope>NUCLEOTIDE SEQUENCE [MRNA]</scope>
    <source>
        <strain>FVB/NJ</strain>
        <tissue>Lung</tissue>
    </source>
</reference>
<reference key="2">
    <citation type="submission" date="2002-02" db="EMBL/GenBank/DDBJ databases">
        <authorList>
            <person name="Sasaki T."/>
            <person name="Yamada Y."/>
        </authorList>
    </citation>
    <scope>SEQUENCE REVISION</scope>
</reference>
<reference key="3">
    <citation type="journal article" date="2001" name="J. Mol. Biol.">
        <title>Short arm region of laminin-5 gamma2 chain: structure, mechanism of processing and binding to heparin and proteins.</title>
        <authorList>
            <person name="Sasaki T."/>
            <person name="Goehring W."/>
            <person name="Mann K."/>
            <person name="Brakebusch C."/>
            <person name="Yamada Y."/>
            <person name="Faessler R."/>
            <person name="Timpl R."/>
        </authorList>
    </citation>
    <scope>INTERACTION WITH HEPARIN; FIBULIN AND NIDOGEN</scope>
    <scope>MUTAGENESIS OF ARG-76; ARG-78; PHE-202; LYS-206; CYS-442 AND CYS-445</scope>
    <source>
        <strain>FVB/NJ</strain>
        <tissue>Lung</tissue>
    </source>
</reference>
<reference key="4">
    <citation type="journal article" date="2010" name="Cell">
        <title>A tissue-specific atlas of mouse protein phosphorylation and expression.</title>
        <authorList>
            <person name="Huttlin E.L."/>
            <person name="Jedrychowski M.P."/>
            <person name="Elias J.E."/>
            <person name="Goswami T."/>
            <person name="Rad R."/>
            <person name="Beausoleil S.A."/>
            <person name="Villen J."/>
            <person name="Haas W."/>
            <person name="Sowa M.E."/>
            <person name="Gygi S.P."/>
        </authorList>
    </citation>
    <scope>IDENTIFICATION BY MASS SPECTROMETRY [LARGE SCALE ANALYSIS]</scope>
    <source>
        <tissue>Lung</tissue>
    </source>
</reference>
<keyword id="KW-0084">Basement membrane</keyword>
<keyword id="KW-0130">Cell adhesion</keyword>
<keyword id="KW-0175">Coiled coil</keyword>
<keyword id="KW-1015">Disulfide bond</keyword>
<keyword id="KW-0272">Extracellular matrix</keyword>
<keyword id="KW-0325">Glycoprotein</keyword>
<keyword id="KW-0358">Heparin-binding</keyword>
<keyword id="KW-0424">Laminin EGF-like domain</keyword>
<keyword id="KW-0654">Proteoglycan</keyword>
<keyword id="KW-1185">Reference proteome</keyword>
<keyword id="KW-0677">Repeat</keyword>
<keyword id="KW-0964">Secreted</keyword>
<keyword id="KW-0732">Signal</keyword>
<name>LAMC2_MOUSE</name>
<protein>
    <recommendedName>
        <fullName>Laminin subunit gamma-2</fullName>
    </recommendedName>
    <alternativeName>
        <fullName>Epiligrin subunit gamma</fullName>
    </alternativeName>
    <alternativeName>
        <fullName>Kalinin subunit gamma</fullName>
    </alternativeName>
    <alternativeName>
        <fullName>Kalinin/nicein/epiligrin 100 kDa subunit</fullName>
    </alternativeName>
    <alternativeName>
        <fullName>Laminin B2t chain</fullName>
    </alternativeName>
    <alternativeName>
        <fullName>Laminin-5 subunit gamma</fullName>
    </alternativeName>
    <alternativeName>
        <fullName>Nicein subunit gamma</fullName>
    </alternativeName>
</protein>